<feature type="chain" id="PRO_0000441224" description="bZIP transcription factor RISBZ3">
    <location>
        <begin position="1"/>
        <end position="298"/>
    </location>
</feature>
<feature type="domain" description="bZIP" evidence="1">
    <location>
        <begin position="141"/>
        <end position="204"/>
    </location>
</feature>
<feature type="region of interest" description="Disordered" evidence="2">
    <location>
        <begin position="13"/>
        <end position="39"/>
    </location>
</feature>
<feature type="region of interest" description="Disordered" evidence="2">
    <location>
        <begin position="104"/>
        <end position="138"/>
    </location>
</feature>
<feature type="region of interest" description="Basic motif" evidence="1">
    <location>
        <begin position="143"/>
        <end position="162"/>
    </location>
</feature>
<feature type="region of interest" description="Leucine-zipper" evidence="1">
    <location>
        <begin position="169"/>
        <end position="183"/>
    </location>
</feature>
<feature type="region of interest" description="Disordered" evidence="2">
    <location>
        <begin position="268"/>
        <end position="298"/>
    </location>
</feature>
<feature type="compositionally biased region" description="Low complexity" evidence="2">
    <location>
        <begin position="109"/>
        <end position="119"/>
    </location>
</feature>
<dbReference type="EMBL" id="L34551">
    <property type="protein sequence ID" value="AAC37418.1"/>
    <property type="molecule type" value="mRNA"/>
</dbReference>
<dbReference type="EMBL" id="AP004683">
    <property type="protein sequence ID" value="BAD27900.1"/>
    <property type="molecule type" value="Genomic_DNA"/>
</dbReference>
<dbReference type="EMBL" id="AP008208">
    <property type="protein sequence ID" value="BAF08421.1"/>
    <property type="molecule type" value="Genomic_DNA"/>
</dbReference>
<dbReference type="EMBL" id="AP014958">
    <property type="protein sequence ID" value="BAS78022.1"/>
    <property type="molecule type" value="Genomic_DNA"/>
</dbReference>
<dbReference type="EMBL" id="CM000139">
    <property type="protein sequence ID" value="EEE56704.1"/>
    <property type="molecule type" value="Genomic_DNA"/>
</dbReference>
<dbReference type="EMBL" id="AK070674">
    <property type="protein sequence ID" value="BAG92089.1"/>
    <property type="molecule type" value="mRNA"/>
</dbReference>
<dbReference type="PIR" id="T03990">
    <property type="entry name" value="T03990"/>
</dbReference>
<dbReference type="SMR" id="Q6ETX0"/>
<dbReference type="FunCoup" id="Q6ETX0">
    <property type="interactions" value="86"/>
</dbReference>
<dbReference type="STRING" id="39947.Q6ETX0"/>
<dbReference type="PaxDb" id="39947-Q6ETX0"/>
<dbReference type="EnsemblPlants" id="Os02t0266800-01">
    <property type="protein sequence ID" value="Os02t0266800-01"/>
    <property type="gene ID" value="Os02g0266800"/>
</dbReference>
<dbReference type="Gramene" id="Os02t0266800-01">
    <property type="protein sequence ID" value="Os02t0266800-01"/>
    <property type="gene ID" value="Os02g0266800"/>
</dbReference>
<dbReference type="KEGG" id="dosa:Os02g0266800"/>
<dbReference type="KEGG" id="osa:4328963"/>
<dbReference type="eggNOG" id="ENOG502QV87">
    <property type="taxonomic scope" value="Eukaryota"/>
</dbReference>
<dbReference type="HOGENOM" id="CLU_057781_0_0_1"/>
<dbReference type="InParanoid" id="Q6ETX0"/>
<dbReference type="OMA" id="HDEMKKC"/>
<dbReference type="OrthoDB" id="1299653at2759"/>
<dbReference type="Proteomes" id="UP000000763">
    <property type="component" value="Chromosome 2"/>
</dbReference>
<dbReference type="Proteomes" id="UP000007752">
    <property type="component" value="Chromosome 2"/>
</dbReference>
<dbReference type="Proteomes" id="UP000059680">
    <property type="component" value="Chromosome 2"/>
</dbReference>
<dbReference type="GO" id="GO:0005634">
    <property type="term" value="C:nucleus"/>
    <property type="evidence" value="ECO:0007669"/>
    <property type="project" value="UniProtKB-SubCell"/>
</dbReference>
<dbReference type="GO" id="GO:0003677">
    <property type="term" value="F:DNA binding"/>
    <property type="evidence" value="ECO:0007669"/>
    <property type="project" value="UniProtKB-KW"/>
</dbReference>
<dbReference type="GO" id="GO:0003700">
    <property type="term" value="F:DNA-binding transcription factor activity"/>
    <property type="evidence" value="ECO:0007669"/>
    <property type="project" value="InterPro"/>
</dbReference>
<dbReference type="CDD" id="cd14702">
    <property type="entry name" value="bZIP_plant_GBF1"/>
    <property type="match status" value="1"/>
</dbReference>
<dbReference type="FunFam" id="1.20.5.170:FF:000020">
    <property type="entry name" value="BZIP transcription factor"/>
    <property type="match status" value="1"/>
</dbReference>
<dbReference type="Gene3D" id="1.20.5.170">
    <property type="match status" value="1"/>
</dbReference>
<dbReference type="InterPro" id="IPR004827">
    <property type="entry name" value="bZIP"/>
</dbReference>
<dbReference type="InterPro" id="IPR045314">
    <property type="entry name" value="bZIP_plant_GBF1"/>
</dbReference>
<dbReference type="InterPro" id="IPR046347">
    <property type="entry name" value="bZIP_sf"/>
</dbReference>
<dbReference type="InterPro" id="IPR044168">
    <property type="entry name" value="RISBZ3/4/5"/>
</dbReference>
<dbReference type="PANTHER" id="PTHR47693:SF1">
    <property type="entry name" value="BZIP TRANSCRIPTION FACTOR RISBZ3"/>
    <property type="match status" value="1"/>
</dbReference>
<dbReference type="PANTHER" id="PTHR47693">
    <property type="entry name" value="BZIP TRANSCRIPTION FACTOR RISBZ3-RELATED"/>
    <property type="match status" value="1"/>
</dbReference>
<dbReference type="Pfam" id="PF00170">
    <property type="entry name" value="bZIP_1"/>
    <property type="match status" value="1"/>
</dbReference>
<dbReference type="SMART" id="SM00338">
    <property type="entry name" value="BRLZ"/>
    <property type="match status" value="1"/>
</dbReference>
<dbReference type="SUPFAM" id="SSF57959">
    <property type="entry name" value="Leucine zipper domain"/>
    <property type="match status" value="1"/>
</dbReference>
<dbReference type="PROSITE" id="PS50217">
    <property type="entry name" value="BZIP"/>
    <property type="match status" value="1"/>
</dbReference>
<dbReference type="PROSITE" id="PS00036">
    <property type="entry name" value="BZIP_BASIC"/>
    <property type="match status" value="1"/>
</dbReference>
<sequence length="298" mass="31745">MKKCPSELNFEAFFHGERGEDDADAAADQKPGGGPHPPPFAMFSAADLSSFGFADSVTSTITGVIPNHIWPQSQSLNARHPAVYTIESQSSICAAASPTSATTLNMKESQTLGGTSGSDSDSESLLDIEGGPCEQSTNPLDVKRMRRMVSNRESARRSRKRKQAHLADLETQVDQLRGENASLFKQLTDANQQFTTAVTDNRILKSDVEALRVKVKMAEDMVARGALSCGLGHLGGLSPALNPRQGACRVPDVLTGLDYAGDDPFTGLSPPEQVQMPGGGEVGDAWGWDNHSNGAMSK</sequence>
<evidence type="ECO:0000255" key="1">
    <source>
        <dbReference type="PROSITE-ProRule" id="PRU00978"/>
    </source>
</evidence>
<evidence type="ECO:0000256" key="2">
    <source>
        <dbReference type="SAM" id="MobiDB-lite"/>
    </source>
</evidence>
<evidence type="ECO:0000269" key="3">
    <source>
    </source>
</evidence>
<evidence type="ECO:0000269" key="4">
    <source>
    </source>
</evidence>
<evidence type="ECO:0000303" key="5">
    <source>
    </source>
</evidence>
<evidence type="ECO:0000303" key="6">
    <source>
    </source>
</evidence>
<evidence type="ECO:0000303" key="7">
    <source>
    </source>
</evidence>
<evidence type="ECO:0000305" key="8"/>
<evidence type="ECO:0000312" key="9">
    <source>
        <dbReference type="EMBL" id="BAD27900.1"/>
    </source>
</evidence>
<evidence type="ECO:0000312" key="10">
    <source>
        <dbReference type="EMBL" id="BAF08421.1"/>
    </source>
</evidence>
<evidence type="ECO:0000312" key="11">
    <source>
        <dbReference type="EMBL" id="EEE56704.1"/>
    </source>
</evidence>
<comment type="function">
    <text evidence="3 4">Transcriptional activator that possesses broad binding specificity for DNA promoter elements with the core sequence 5'-ACGT-3'. May be involved in the regulation of genes expressed during seed development (PubMed:7919992). Binds to the DNA specific sequence 5'-TGAGTCA-3' found in seed storage protein gene promoters (PubMed:11133985).</text>
</comment>
<comment type="subunit">
    <text evidence="3">Heterodimer with RISBZ1/BZIP58.</text>
</comment>
<comment type="subcellular location">
    <subcellularLocation>
        <location evidence="1">Nucleus</location>
    </subcellularLocation>
</comment>
<comment type="tissue specificity">
    <text evidence="4">Expressed in developing endosperm, especially in aleurone layer cells.</text>
</comment>
<comment type="developmental stage">
    <text evidence="3">Expressed in developing seeds from 10 to 30 days after flowering (DAF).</text>
</comment>
<reference key="1">
    <citation type="journal article" date="1994" name="Plant Cell">
        <title>The rice bZIP transcriptional activator RITA-1 is highly expressed during seed development.</title>
        <authorList>
            <person name="Izawa T."/>
            <person name="Foster R."/>
            <person name="Nakajima M."/>
            <person name="Shimamoto K."/>
            <person name="Chua N.H."/>
        </authorList>
    </citation>
    <scope>NUCLEOTIDE SEQUENCE [MRNA]</scope>
    <scope>FUNCTION</scope>
    <scope>TISSUE SPECIFICITY</scope>
</reference>
<reference key="2">
    <citation type="journal article" date="2005" name="Nature">
        <title>The map-based sequence of the rice genome.</title>
        <authorList>
            <consortium name="International rice genome sequencing project (IRGSP)"/>
        </authorList>
    </citation>
    <scope>NUCLEOTIDE SEQUENCE [LARGE SCALE GENOMIC DNA]</scope>
    <source>
        <strain>cv. Nipponbare</strain>
    </source>
</reference>
<reference key="3">
    <citation type="journal article" date="2008" name="Nucleic Acids Res.">
        <title>The rice annotation project database (RAP-DB): 2008 update.</title>
        <authorList>
            <consortium name="The rice annotation project (RAP)"/>
        </authorList>
    </citation>
    <scope>GENOME REANNOTATION</scope>
    <source>
        <strain>cv. Nipponbare</strain>
    </source>
</reference>
<reference key="4">
    <citation type="journal article" date="2013" name="Rice">
        <title>Improvement of the Oryza sativa Nipponbare reference genome using next generation sequence and optical map data.</title>
        <authorList>
            <person name="Kawahara Y."/>
            <person name="de la Bastide M."/>
            <person name="Hamilton J.P."/>
            <person name="Kanamori H."/>
            <person name="McCombie W.R."/>
            <person name="Ouyang S."/>
            <person name="Schwartz D.C."/>
            <person name="Tanaka T."/>
            <person name="Wu J."/>
            <person name="Zhou S."/>
            <person name="Childs K.L."/>
            <person name="Davidson R.M."/>
            <person name="Lin H."/>
            <person name="Quesada-Ocampo L."/>
            <person name="Vaillancourt B."/>
            <person name="Sakai H."/>
            <person name="Lee S.S."/>
            <person name="Kim J."/>
            <person name="Numa H."/>
            <person name="Itoh T."/>
            <person name="Buell C.R."/>
            <person name="Matsumoto T."/>
        </authorList>
    </citation>
    <scope>GENOME REANNOTATION</scope>
    <source>
        <strain>cv. Nipponbare</strain>
    </source>
</reference>
<reference key="5">
    <citation type="journal article" date="2005" name="PLoS Biol.">
        <title>The genomes of Oryza sativa: a history of duplications.</title>
        <authorList>
            <person name="Yu J."/>
            <person name="Wang J."/>
            <person name="Lin W."/>
            <person name="Li S."/>
            <person name="Li H."/>
            <person name="Zhou J."/>
            <person name="Ni P."/>
            <person name="Dong W."/>
            <person name="Hu S."/>
            <person name="Zeng C."/>
            <person name="Zhang J."/>
            <person name="Zhang Y."/>
            <person name="Li R."/>
            <person name="Xu Z."/>
            <person name="Li S."/>
            <person name="Li X."/>
            <person name="Zheng H."/>
            <person name="Cong L."/>
            <person name="Lin L."/>
            <person name="Yin J."/>
            <person name="Geng J."/>
            <person name="Li G."/>
            <person name="Shi J."/>
            <person name="Liu J."/>
            <person name="Lv H."/>
            <person name="Li J."/>
            <person name="Wang J."/>
            <person name="Deng Y."/>
            <person name="Ran L."/>
            <person name="Shi X."/>
            <person name="Wang X."/>
            <person name="Wu Q."/>
            <person name="Li C."/>
            <person name="Ren X."/>
            <person name="Wang J."/>
            <person name="Wang X."/>
            <person name="Li D."/>
            <person name="Liu D."/>
            <person name="Zhang X."/>
            <person name="Ji Z."/>
            <person name="Zhao W."/>
            <person name="Sun Y."/>
            <person name="Zhang Z."/>
            <person name="Bao J."/>
            <person name="Han Y."/>
            <person name="Dong L."/>
            <person name="Ji J."/>
            <person name="Chen P."/>
            <person name="Wu S."/>
            <person name="Liu J."/>
            <person name="Xiao Y."/>
            <person name="Bu D."/>
            <person name="Tan J."/>
            <person name="Yang L."/>
            <person name="Ye C."/>
            <person name="Zhang J."/>
            <person name="Xu J."/>
            <person name="Zhou Y."/>
            <person name="Yu Y."/>
            <person name="Zhang B."/>
            <person name="Zhuang S."/>
            <person name="Wei H."/>
            <person name="Liu B."/>
            <person name="Lei M."/>
            <person name="Yu H."/>
            <person name="Li Y."/>
            <person name="Xu H."/>
            <person name="Wei S."/>
            <person name="He X."/>
            <person name="Fang L."/>
            <person name="Zhang Z."/>
            <person name="Zhang Y."/>
            <person name="Huang X."/>
            <person name="Su Z."/>
            <person name="Tong W."/>
            <person name="Li J."/>
            <person name="Tong Z."/>
            <person name="Li S."/>
            <person name="Ye J."/>
            <person name="Wang L."/>
            <person name="Fang L."/>
            <person name="Lei T."/>
            <person name="Chen C.-S."/>
            <person name="Chen H.-C."/>
            <person name="Xu Z."/>
            <person name="Li H."/>
            <person name="Huang H."/>
            <person name="Zhang F."/>
            <person name="Xu H."/>
            <person name="Li N."/>
            <person name="Zhao C."/>
            <person name="Li S."/>
            <person name="Dong L."/>
            <person name="Huang Y."/>
            <person name="Li L."/>
            <person name="Xi Y."/>
            <person name="Qi Q."/>
            <person name="Li W."/>
            <person name="Zhang B."/>
            <person name="Hu W."/>
            <person name="Zhang Y."/>
            <person name="Tian X."/>
            <person name="Jiao Y."/>
            <person name="Liang X."/>
            <person name="Jin J."/>
            <person name="Gao L."/>
            <person name="Zheng W."/>
            <person name="Hao B."/>
            <person name="Liu S.-M."/>
            <person name="Wang W."/>
            <person name="Yuan L."/>
            <person name="Cao M."/>
            <person name="McDermott J."/>
            <person name="Samudrala R."/>
            <person name="Wang J."/>
            <person name="Wong G.K.-S."/>
            <person name="Yang H."/>
        </authorList>
    </citation>
    <scope>NUCLEOTIDE SEQUENCE [LARGE SCALE GENOMIC DNA]</scope>
    <source>
        <strain>cv. Nipponbare</strain>
    </source>
</reference>
<reference key="6">
    <citation type="journal article" date="2003" name="Science">
        <title>Collection, mapping, and annotation of over 28,000 cDNA clones from japonica rice.</title>
        <authorList>
            <consortium name="The rice full-length cDNA consortium"/>
        </authorList>
    </citation>
    <scope>NUCLEOTIDE SEQUENCE [LARGE SCALE MRNA]</scope>
    <source>
        <strain>cv. Nipponbare</strain>
    </source>
</reference>
<reference key="7">
    <citation type="journal article" date="2001" name="J. Biol. Chem.">
        <title>A rice functional transcriptional activator, RISBZ1, responsible for endosperm-specific expression of storage protein genes through GCN4 motif.</title>
        <authorList>
            <person name="Onodera Y."/>
            <person name="Suzuki A."/>
            <person name="Wu C.Y."/>
            <person name="Washida H."/>
            <person name="Takaiwa F."/>
        </authorList>
    </citation>
    <scope>FUNCTION</scope>
    <scope>SUBUNIT</scope>
    <scope>DEVELOPMENTAL STAGE</scope>
</reference>
<reference key="8">
    <citation type="journal article" date="2008" name="Plant Physiol.">
        <title>Genomic survey and gene expression analysis of the basic leucine zipper transcription factor family in rice.</title>
        <authorList>
            <person name="Nijhawan A."/>
            <person name="Jain M."/>
            <person name="Tyagi A.K."/>
            <person name="Khurana J.P."/>
        </authorList>
    </citation>
    <scope>GENE FAMILY</scope>
    <scope>NOMENCLATURE</scope>
</reference>
<name>RSBZ3_ORYSJ</name>
<gene>
    <name evidence="5" type="primary">RISBZ3</name>
    <name evidence="6" type="synonym">BZIP20</name>
    <name evidence="7" type="synonym">RITA-1</name>
    <name evidence="10" type="ordered locus">Os02g0266800</name>
    <name evidence="8" type="ordered locus">LOC_Os02g16680</name>
    <name evidence="11" type="ORF">OsJ_06179</name>
    <name evidence="9" type="ORF">P0006C08.38</name>
</gene>
<accession>Q6ETX0</accession>
<accession>Q40724</accession>
<proteinExistence type="evidence at protein level"/>
<protein>
    <recommendedName>
        <fullName evidence="8">bZIP transcription factor RISBZ3</fullName>
    </recommendedName>
    <alternativeName>
        <fullName evidence="8">Rice seed bZIP3</fullName>
    </alternativeName>
    <alternativeName>
        <fullName evidence="6">bZIP transcription factor 20</fullName>
        <shortName evidence="6">OsbZIP20</shortName>
    </alternativeName>
</protein>
<organism>
    <name type="scientific">Oryza sativa subsp. japonica</name>
    <name type="common">Rice</name>
    <dbReference type="NCBI Taxonomy" id="39947"/>
    <lineage>
        <taxon>Eukaryota</taxon>
        <taxon>Viridiplantae</taxon>
        <taxon>Streptophyta</taxon>
        <taxon>Embryophyta</taxon>
        <taxon>Tracheophyta</taxon>
        <taxon>Spermatophyta</taxon>
        <taxon>Magnoliopsida</taxon>
        <taxon>Liliopsida</taxon>
        <taxon>Poales</taxon>
        <taxon>Poaceae</taxon>
        <taxon>BOP clade</taxon>
        <taxon>Oryzoideae</taxon>
        <taxon>Oryzeae</taxon>
        <taxon>Oryzinae</taxon>
        <taxon>Oryza</taxon>
        <taxon>Oryza sativa</taxon>
    </lineage>
</organism>
<keyword id="KW-0238">DNA-binding</keyword>
<keyword id="KW-0539">Nucleus</keyword>
<keyword id="KW-1185">Reference proteome</keyword>
<keyword id="KW-0804">Transcription</keyword>
<keyword id="KW-0805">Transcription regulation</keyword>